<comment type="function">
    <text evidence="1">Catalyzes the transfer of the enolpyruvyl moiety of phosphoenolpyruvate (PEP) to the 5-hydroxyl of shikimate-3-phosphate (S3P) to produce enolpyruvyl shikimate-3-phosphate and inorganic phosphate.</text>
</comment>
<comment type="catalytic activity">
    <reaction evidence="1">
        <text>3-phosphoshikimate + phosphoenolpyruvate = 5-O-(1-carboxyvinyl)-3-phosphoshikimate + phosphate</text>
        <dbReference type="Rhea" id="RHEA:21256"/>
        <dbReference type="ChEBI" id="CHEBI:43474"/>
        <dbReference type="ChEBI" id="CHEBI:57701"/>
        <dbReference type="ChEBI" id="CHEBI:58702"/>
        <dbReference type="ChEBI" id="CHEBI:145989"/>
        <dbReference type="EC" id="2.5.1.19"/>
    </reaction>
    <physiologicalReaction direction="left-to-right" evidence="1">
        <dbReference type="Rhea" id="RHEA:21257"/>
    </physiologicalReaction>
</comment>
<comment type="pathway">
    <text evidence="1">Metabolic intermediate biosynthesis; chorismate biosynthesis.</text>
</comment>
<comment type="subunit">
    <text evidence="1">Monomer.</text>
</comment>
<comment type="subcellular location">
    <subcellularLocation>
        <location evidence="1">Cytoplasm</location>
    </subcellularLocation>
</comment>
<comment type="similarity">
    <text evidence="1">Belongs to the EPSP synthase family.</text>
</comment>
<organism>
    <name type="scientific">Methanosarcina acetivorans (strain ATCC 35395 / DSM 2834 / JCM 12185 / C2A)</name>
    <dbReference type="NCBI Taxonomy" id="188937"/>
    <lineage>
        <taxon>Archaea</taxon>
        <taxon>Methanobacteriati</taxon>
        <taxon>Methanobacteriota</taxon>
        <taxon>Stenosarchaea group</taxon>
        <taxon>Methanomicrobia</taxon>
        <taxon>Methanosarcinales</taxon>
        <taxon>Methanosarcinaceae</taxon>
        <taxon>Methanosarcina</taxon>
    </lineage>
</organism>
<protein>
    <recommendedName>
        <fullName evidence="1">3-phosphoshikimate 1-carboxyvinyltransferase</fullName>
        <ecNumber evidence="1">2.5.1.19</ecNumber>
    </recommendedName>
    <alternativeName>
        <fullName evidence="1">5-enolpyruvylshikimate-3-phosphate synthase</fullName>
        <shortName evidence="1">EPSP synthase</shortName>
        <shortName evidence="1">EPSPS</shortName>
    </alternativeName>
</protein>
<name>AROA_METAC</name>
<evidence type="ECO:0000255" key="1">
    <source>
        <dbReference type="HAMAP-Rule" id="MF_00210"/>
    </source>
</evidence>
<sequence>MRVSISKSSVKGEVFAPSSKSYTHRAITLAALSNESIVRRPLLSADTLATIRASEMFGASVKREEENLIIHGFNGKPNVPDDVIDAANSGTTLRLMTAIAGLTDGITVLTGDSSLRTRPNGPLLKTLNQLGASACSTRGNEKAPLVVKGGLEGKKVSIEGSISSQFISALLIACPLAENSTTLSIIGKLKSRPYVDVTIEMLELAGVKIHTDENNGTKFIIPGKQKYDLKEYTIPGDFSSASYLLAAAAMTEGSEITVKNLFPSKQGDKLIIETLKQMGADITWDREAGIVTVRGGRKLKAVTFDAGATPDLVPTVAVLAAVAEGTSRIENAEHVRYKETDRLSALATELPKLGVKLKEEKDSLTITGGELKGAEVHGWDDHRIVMSLALAGMVAGNTTIDTTESVAISYPDFFEDMSNLGVKIKQISEE</sequence>
<gene>
    <name evidence="1" type="primary">aroA</name>
    <name type="ordered locus">MA_4544</name>
</gene>
<feature type="chain" id="PRO_0000088328" description="3-phosphoshikimate 1-carboxyvinyltransferase">
    <location>
        <begin position="1"/>
        <end position="430"/>
    </location>
</feature>
<feature type="active site" description="Proton acceptor" evidence="1">
    <location>
        <position position="311"/>
    </location>
</feature>
<feature type="binding site" evidence="1">
    <location>
        <position position="20"/>
    </location>
    <ligand>
        <name>3-phosphoshikimate</name>
        <dbReference type="ChEBI" id="CHEBI:145989"/>
    </ligand>
</feature>
<feature type="binding site" evidence="1">
    <location>
        <position position="20"/>
    </location>
    <ligand>
        <name>phosphoenolpyruvate</name>
        <dbReference type="ChEBI" id="CHEBI:58702"/>
    </ligand>
</feature>
<feature type="binding site" evidence="1">
    <location>
        <position position="21"/>
    </location>
    <ligand>
        <name>3-phosphoshikimate</name>
        <dbReference type="ChEBI" id="CHEBI:145989"/>
    </ligand>
</feature>
<feature type="binding site" evidence="1">
    <location>
        <position position="25"/>
    </location>
    <ligand>
        <name>3-phosphoshikimate</name>
        <dbReference type="ChEBI" id="CHEBI:145989"/>
    </ligand>
</feature>
<feature type="binding site" evidence="1">
    <location>
        <position position="90"/>
    </location>
    <ligand>
        <name>phosphoenolpyruvate</name>
        <dbReference type="ChEBI" id="CHEBI:58702"/>
    </ligand>
</feature>
<feature type="binding site" evidence="1">
    <location>
        <position position="118"/>
    </location>
    <ligand>
        <name>phosphoenolpyruvate</name>
        <dbReference type="ChEBI" id="CHEBI:58702"/>
    </ligand>
</feature>
<feature type="binding site" evidence="1">
    <location>
        <position position="163"/>
    </location>
    <ligand>
        <name>3-phosphoshikimate</name>
        <dbReference type="ChEBI" id="CHEBI:145989"/>
    </ligand>
</feature>
<feature type="binding site" evidence="1">
    <location>
        <position position="164"/>
    </location>
    <ligand>
        <name>3-phosphoshikimate</name>
        <dbReference type="ChEBI" id="CHEBI:145989"/>
    </ligand>
</feature>
<feature type="binding site" evidence="1">
    <location>
        <position position="165"/>
    </location>
    <ligand>
        <name>3-phosphoshikimate</name>
        <dbReference type="ChEBI" id="CHEBI:145989"/>
    </ligand>
</feature>
<feature type="binding site" evidence="1">
    <location>
        <position position="165"/>
    </location>
    <ligand>
        <name>phosphoenolpyruvate</name>
        <dbReference type="ChEBI" id="CHEBI:58702"/>
    </ligand>
</feature>
<feature type="binding site" evidence="1">
    <location>
        <position position="191"/>
    </location>
    <ligand>
        <name>3-phosphoshikimate</name>
        <dbReference type="ChEBI" id="CHEBI:145989"/>
    </ligand>
</feature>
<feature type="binding site" evidence="1">
    <location>
        <position position="311"/>
    </location>
    <ligand>
        <name>3-phosphoshikimate</name>
        <dbReference type="ChEBI" id="CHEBI:145989"/>
    </ligand>
</feature>
<feature type="binding site" evidence="1">
    <location>
        <position position="338"/>
    </location>
    <ligand>
        <name>3-phosphoshikimate</name>
        <dbReference type="ChEBI" id="CHEBI:145989"/>
    </ligand>
</feature>
<feature type="binding site" evidence="1">
    <location>
        <position position="342"/>
    </location>
    <ligand>
        <name>phosphoenolpyruvate</name>
        <dbReference type="ChEBI" id="CHEBI:58702"/>
    </ligand>
</feature>
<feature type="binding site" evidence="1">
    <location>
        <position position="383"/>
    </location>
    <ligand>
        <name>phosphoenolpyruvate</name>
        <dbReference type="ChEBI" id="CHEBI:58702"/>
    </ligand>
</feature>
<dbReference type="EC" id="2.5.1.19" evidence="1"/>
<dbReference type="EMBL" id="AE010299">
    <property type="protein sequence ID" value="AAM07883.1"/>
    <property type="molecule type" value="Genomic_DNA"/>
</dbReference>
<dbReference type="RefSeq" id="WP_011024417.1">
    <property type="nucleotide sequence ID" value="NC_003552.1"/>
</dbReference>
<dbReference type="SMR" id="Q8THH3"/>
<dbReference type="FunCoup" id="Q8THH3">
    <property type="interactions" value="132"/>
</dbReference>
<dbReference type="STRING" id="188937.MA_4544"/>
<dbReference type="EnsemblBacteria" id="AAM07883">
    <property type="protein sequence ID" value="AAM07883"/>
    <property type="gene ID" value="MA_4544"/>
</dbReference>
<dbReference type="GeneID" id="1476438"/>
<dbReference type="KEGG" id="mac:MA_4544"/>
<dbReference type="HOGENOM" id="CLU_024321_0_0_2"/>
<dbReference type="InParanoid" id="Q8THH3"/>
<dbReference type="OrthoDB" id="43788at2157"/>
<dbReference type="PhylomeDB" id="Q8THH3"/>
<dbReference type="UniPathway" id="UPA00053"/>
<dbReference type="Proteomes" id="UP000002487">
    <property type="component" value="Chromosome"/>
</dbReference>
<dbReference type="GO" id="GO:0005737">
    <property type="term" value="C:cytoplasm"/>
    <property type="evidence" value="ECO:0007669"/>
    <property type="project" value="UniProtKB-SubCell"/>
</dbReference>
<dbReference type="GO" id="GO:0003866">
    <property type="term" value="F:3-phosphoshikimate 1-carboxyvinyltransferase activity"/>
    <property type="evidence" value="ECO:0000318"/>
    <property type="project" value="GO_Central"/>
</dbReference>
<dbReference type="GO" id="GO:0008652">
    <property type="term" value="P:amino acid biosynthetic process"/>
    <property type="evidence" value="ECO:0007669"/>
    <property type="project" value="UniProtKB-KW"/>
</dbReference>
<dbReference type="GO" id="GO:0009073">
    <property type="term" value="P:aromatic amino acid family biosynthetic process"/>
    <property type="evidence" value="ECO:0007669"/>
    <property type="project" value="UniProtKB-KW"/>
</dbReference>
<dbReference type="GO" id="GO:0009423">
    <property type="term" value="P:chorismate biosynthetic process"/>
    <property type="evidence" value="ECO:0000318"/>
    <property type="project" value="GO_Central"/>
</dbReference>
<dbReference type="CDD" id="cd01556">
    <property type="entry name" value="EPSP_synthase"/>
    <property type="match status" value="1"/>
</dbReference>
<dbReference type="FunFam" id="3.65.10.10:FF:000012">
    <property type="entry name" value="Pentafunctional AROM polypeptide"/>
    <property type="match status" value="1"/>
</dbReference>
<dbReference type="Gene3D" id="3.65.10.10">
    <property type="entry name" value="Enolpyruvate transferase domain"/>
    <property type="match status" value="2"/>
</dbReference>
<dbReference type="HAMAP" id="MF_00210">
    <property type="entry name" value="EPSP_synth"/>
    <property type="match status" value="1"/>
</dbReference>
<dbReference type="InterPro" id="IPR001986">
    <property type="entry name" value="Enolpyruvate_Tfrase_dom"/>
</dbReference>
<dbReference type="InterPro" id="IPR036968">
    <property type="entry name" value="Enolpyruvate_Tfrase_sf"/>
</dbReference>
<dbReference type="InterPro" id="IPR006264">
    <property type="entry name" value="EPSP_synthase"/>
</dbReference>
<dbReference type="InterPro" id="IPR023193">
    <property type="entry name" value="EPSP_synthase_CS"/>
</dbReference>
<dbReference type="InterPro" id="IPR013792">
    <property type="entry name" value="RNA3'P_cycl/enolpyr_Trfase_a/b"/>
</dbReference>
<dbReference type="NCBIfam" id="TIGR01356">
    <property type="entry name" value="aroA"/>
    <property type="match status" value="1"/>
</dbReference>
<dbReference type="PANTHER" id="PTHR21090">
    <property type="entry name" value="AROM/DEHYDROQUINATE SYNTHASE"/>
    <property type="match status" value="1"/>
</dbReference>
<dbReference type="PANTHER" id="PTHR21090:SF5">
    <property type="entry name" value="PENTAFUNCTIONAL AROM POLYPEPTIDE"/>
    <property type="match status" value="1"/>
</dbReference>
<dbReference type="Pfam" id="PF00275">
    <property type="entry name" value="EPSP_synthase"/>
    <property type="match status" value="1"/>
</dbReference>
<dbReference type="PIRSF" id="PIRSF000505">
    <property type="entry name" value="EPSPS"/>
    <property type="match status" value="1"/>
</dbReference>
<dbReference type="SUPFAM" id="SSF55205">
    <property type="entry name" value="EPT/RTPC-like"/>
    <property type="match status" value="1"/>
</dbReference>
<dbReference type="PROSITE" id="PS00104">
    <property type="entry name" value="EPSP_SYNTHASE_1"/>
    <property type="match status" value="1"/>
</dbReference>
<dbReference type="PROSITE" id="PS00885">
    <property type="entry name" value="EPSP_SYNTHASE_2"/>
    <property type="match status" value="1"/>
</dbReference>
<proteinExistence type="inferred from homology"/>
<accession>Q8THH3</accession>
<reference key="1">
    <citation type="journal article" date="2002" name="Genome Res.">
        <title>The genome of Methanosarcina acetivorans reveals extensive metabolic and physiological diversity.</title>
        <authorList>
            <person name="Galagan J.E."/>
            <person name="Nusbaum C."/>
            <person name="Roy A."/>
            <person name="Endrizzi M.G."/>
            <person name="Macdonald P."/>
            <person name="FitzHugh W."/>
            <person name="Calvo S."/>
            <person name="Engels R."/>
            <person name="Smirnov S."/>
            <person name="Atnoor D."/>
            <person name="Brown A."/>
            <person name="Allen N."/>
            <person name="Naylor J."/>
            <person name="Stange-Thomann N."/>
            <person name="DeArellano K."/>
            <person name="Johnson R."/>
            <person name="Linton L."/>
            <person name="McEwan P."/>
            <person name="McKernan K."/>
            <person name="Talamas J."/>
            <person name="Tirrell A."/>
            <person name="Ye W."/>
            <person name="Zimmer A."/>
            <person name="Barber R.D."/>
            <person name="Cann I."/>
            <person name="Graham D.E."/>
            <person name="Grahame D.A."/>
            <person name="Guss A.M."/>
            <person name="Hedderich R."/>
            <person name="Ingram-Smith C."/>
            <person name="Kuettner H.C."/>
            <person name="Krzycki J.A."/>
            <person name="Leigh J.A."/>
            <person name="Li W."/>
            <person name="Liu J."/>
            <person name="Mukhopadhyay B."/>
            <person name="Reeve J.N."/>
            <person name="Smith K."/>
            <person name="Springer T.A."/>
            <person name="Umayam L.A."/>
            <person name="White O."/>
            <person name="White R.H."/>
            <person name="de Macario E.C."/>
            <person name="Ferry J.G."/>
            <person name="Jarrell K.F."/>
            <person name="Jing H."/>
            <person name="Macario A.J.L."/>
            <person name="Paulsen I.T."/>
            <person name="Pritchett M."/>
            <person name="Sowers K.R."/>
            <person name="Swanson R.V."/>
            <person name="Zinder S.H."/>
            <person name="Lander E."/>
            <person name="Metcalf W.W."/>
            <person name="Birren B."/>
        </authorList>
    </citation>
    <scope>NUCLEOTIDE SEQUENCE [LARGE SCALE GENOMIC DNA]</scope>
    <source>
        <strain>ATCC 35395 / DSM 2834 / JCM 12185 / C2A</strain>
    </source>
</reference>
<keyword id="KW-0028">Amino-acid biosynthesis</keyword>
<keyword id="KW-0057">Aromatic amino acid biosynthesis</keyword>
<keyword id="KW-0963">Cytoplasm</keyword>
<keyword id="KW-1185">Reference proteome</keyword>
<keyword id="KW-0808">Transferase</keyword>